<protein>
    <recommendedName>
        <fullName evidence="1">6,7-dimethyl-8-ribityllumazine synthase</fullName>
        <shortName evidence="1">DMRL synthase</shortName>
        <shortName evidence="1">LS</shortName>
        <shortName evidence="1">Lumazine synthase</shortName>
        <ecNumber evidence="1">2.5.1.78</ecNumber>
    </recommendedName>
</protein>
<gene>
    <name evidence="1" type="primary">ribH</name>
    <name type="ordered locus">ESA_02887</name>
</gene>
<keyword id="KW-1185">Reference proteome</keyword>
<keyword id="KW-0686">Riboflavin biosynthesis</keyword>
<keyword id="KW-0808">Transferase</keyword>
<name>RISB_CROS8</name>
<reference key="1">
    <citation type="journal article" date="2010" name="PLoS ONE">
        <title>Genome sequence of Cronobacter sakazakii BAA-894 and comparative genomic hybridization analysis with other Cronobacter species.</title>
        <authorList>
            <person name="Kucerova E."/>
            <person name="Clifton S.W."/>
            <person name="Xia X.Q."/>
            <person name="Long F."/>
            <person name="Porwollik S."/>
            <person name="Fulton L."/>
            <person name="Fronick C."/>
            <person name="Minx P."/>
            <person name="Kyung K."/>
            <person name="Warren W."/>
            <person name="Fulton R."/>
            <person name="Feng D."/>
            <person name="Wollam A."/>
            <person name="Shah N."/>
            <person name="Bhonagiri V."/>
            <person name="Nash W.E."/>
            <person name="Hallsworth-Pepin K."/>
            <person name="Wilson R.K."/>
            <person name="McClelland M."/>
            <person name="Forsythe S.J."/>
        </authorList>
    </citation>
    <scope>NUCLEOTIDE SEQUENCE [LARGE SCALE GENOMIC DNA]</scope>
    <source>
        <strain>ATCC BAA-894</strain>
    </source>
</reference>
<comment type="function">
    <text evidence="1">Catalyzes the formation of 6,7-dimethyl-8-ribityllumazine by condensation of 5-amino-6-(D-ribitylamino)uracil with 3,4-dihydroxy-2-butanone 4-phosphate. This is the penultimate step in the biosynthesis of riboflavin.</text>
</comment>
<comment type="catalytic activity">
    <reaction evidence="1">
        <text>(2S)-2-hydroxy-3-oxobutyl phosphate + 5-amino-6-(D-ribitylamino)uracil = 6,7-dimethyl-8-(1-D-ribityl)lumazine + phosphate + 2 H2O + H(+)</text>
        <dbReference type="Rhea" id="RHEA:26152"/>
        <dbReference type="ChEBI" id="CHEBI:15377"/>
        <dbReference type="ChEBI" id="CHEBI:15378"/>
        <dbReference type="ChEBI" id="CHEBI:15934"/>
        <dbReference type="ChEBI" id="CHEBI:43474"/>
        <dbReference type="ChEBI" id="CHEBI:58201"/>
        <dbReference type="ChEBI" id="CHEBI:58830"/>
        <dbReference type="EC" id="2.5.1.78"/>
    </reaction>
</comment>
<comment type="pathway">
    <text evidence="1">Cofactor biosynthesis; riboflavin biosynthesis; riboflavin from 2-hydroxy-3-oxobutyl phosphate and 5-amino-6-(D-ribitylamino)uracil: step 1/2.</text>
</comment>
<comment type="subunit">
    <text evidence="1">Forms an icosahedral capsid composed of 60 subunits, arranged as a dodecamer of pentamers.</text>
</comment>
<comment type="similarity">
    <text evidence="1">Belongs to the DMRL synthase family.</text>
</comment>
<dbReference type="EC" id="2.5.1.78" evidence="1"/>
<dbReference type="EMBL" id="CP000783">
    <property type="protein sequence ID" value="ABU78116.1"/>
    <property type="molecule type" value="Genomic_DNA"/>
</dbReference>
<dbReference type="SMR" id="A7MFG5"/>
<dbReference type="KEGG" id="esa:ESA_02887"/>
<dbReference type="HOGENOM" id="CLU_089358_1_1_6"/>
<dbReference type="UniPathway" id="UPA00275">
    <property type="reaction ID" value="UER00404"/>
</dbReference>
<dbReference type="Proteomes" id="UP000000260">
    <property type="component" value="Chromosome"/>
</dbReference>
<dbReference type="GO" id="GO:0005829">
    <property type="term" value="C:cytosol"/>
    <property type="evidence" value="ECO:0007669"/>
    <property type="project" value="TreeGrafter"/>
</dbReference>
<dbReference type="GO" id="GO:0009349">
    <property type="term" value="C:riboflavin synthase complex"/>
    <property type="evidence" value="ECO:0007669"/>
    <property type="project" value="InterPro"/>
</dbReference>
<dbReference type="GO" id="GO:0000906">
    <property type="term" value="F:6,7-dimethyl-8-ribityllumazine synthase activity"/>
    <property type="evidence" value="ECO:0007669"/>
    <property type="project" value="UniProtKB-UniRule"/>
</dbReference>
<dbReference type="GO" id="GO:0009231">
    <property type="term" value="P:riboflavin biosynthetic process"/>
    <property type="evidence" value="ECO:0007669"/>
    <property type="project" value="UniProtKB-UniRule"/>
</dbReference>
<dbReference type="CDD" id="cd09209">
    <property type="entry name" value="Lumazine_synthase-I"/>
    <property type="match status" value="1"/>
</dbReference>
<dbReference type="FunFam" id="3.40.50.960:FF:000001">
    <property type="entry name" value="6,7-dimethyl-8-ribityllumazine synthase"/>
    <property type="match status" value="1"/>
</dbReference>
<dbReference type="Gene3D" id="3.40.50.960">
    <property type="entry name" value="Lumazine/riboflavin synthase"/>
    <property type="match status" value="1"/>
</dbReference>
<dbReference type="HAMAP" id="MF_00178">
    <property type="entry name" value="Lumazine_synth"/>
    <property type="match status" value="1"/>
</dbReference>
<dbReference type="InterPro" id="IPR034964">
    <property type="entry name" value="LS"/>
</dbReference>
<dbReference type="InterPro" id="IPR002180">
    <property type="entry name" value="LS/RS"/>
</dbReference>
<dbReference type="InterPro" id="IPR036467">
    <property type="entry name" value="LS/RS_sf"/>
</dbReference>
<dbReference type="NCBIfam" id="TIGR00114">
    <property type="entry name" value="lumazine-synth"/>
    <property type="match status" value="1"/>
</dbReference>
<dbReference type="NCBIfam" id="NF000812">
    <property type="entry name" value="PRK00061.1-4"/>
    <property type="match status" value="1"/>
</dbReference>
<dbReference type="PANTHER" id="PTHR21058:SF0">
    <property type="entry name" value="6,7-DIMETHYL-8-RIBITYLLUMAZINE SYNTHASE"/>
    <property type="match status" value="1"/>
</dbReference>
<dbReference type="PANTHER" id="PTHR21058">
    <property type="entry name" value="6,7-DIMETHYL-8-RIBITYLLUMAZINE SYNTHASE DMRL SYNTHASE LUMAZINE SYNTHASE"/>
    <property type="match status" value="1"/>
</dbReference>
<dbReference type="Pfam" id="PF00885">
    <property type="entry name" value="DMRL_synthase"/>
    <property type="match status" value="1"/>
</dbReference>
<dbReference type="SUPFAM" id="SSF52121">
    <property type="entry name" value="Lumazine synthase"/>
    <property type="match status" value="1"/>
</dbReference>
<accession>A7MFG5</accession>
<sequence length="156" mass="16191">MNIIEATVAAPDARVAIAIARFNNFINDSLLEGAIDALKRIGQVKDENITVVWVPGAYELPLAAQALAKTAKYDAVIALGTVIRGGTAHFEYVAGGASNGLAHVAQHSEIPVAFGVLTTESIEQAIERAGTKAGNKGAEAALTALEMINVLKAIQA</sequence>
<proteinExistence type="inferred from homology"/>
<organism>
    <name type="scientific">Cronobacter sakazakii (strain ATCC BAA-894)</name>
    <name type="common">Enterobacter sakazakii</name>
    <dbReference type="NCBI Taxonomy" id="290339"/>
    <lineage>
        <taxon>Bacteria</taxon>
        <taxon>Pseudomonadati</taxon>
        <taxon>Pseudomonadota</taxon>
        <taxon>Gammaproteobacteria</taxon>
        <taxon>Enterobacterales</taxon>
        <taxon>Enterobacteriaceae</taxon>
        <taxon>Cronobacter</taxon>
    </lineage>
</organism>
<evidence type="ECO:0000255" key="1">
    <source>
        <dbReference type="HAMAP-Rule" id="MF_00178"/>
    </source>
</evidence>
<feature type="chain" id="PRO_1000040419" description="6,7-dimethyl-8-ribityllumazine synthase">
    <location>
        <begin position="1"/>
        <end position="156"/>
    </location>
</feature>
<feature type="active site" description="Proton donor" evidence="1">
    <location>
        <position position="89"/>
    </location>
</feature>
<feature type="binding site" evidence="1">
    <location>
        <position position="22"/>
    </location>
    <ligand>
        <name>5-amino-6-(D-ribitylamino)uracil</name>
        <dbReference type="ChEBI" id="CHEBI:15934"/>
    </ligand>
</feature>
<feature type="binding site" evidence="1">
    <location>
        <begin position="57"/>
        <end position="59"/>
    </location>
    <ligand>
        <name>5-amino-6-(D-ribitylamino)uracil</name>
        <dbReference type="ChEBI" id="CHEBI:15934"/>
    </ligand>
</feature>
<feature type="binding site" evidence="1">
    <location>
        <begin position="81"/>
        <end position="83"/>
    </location>
    <ligand>
        <name>5-amino-6-(D-ribitylamino)uracil</name>
        <dbReference type="ChEBI" id="CHEBI:15934"/>
    </ligand>
</feature>
<feature type="binding site" evidence="1">
    <location>
        <begin position="86"/>
        <end position="87"/>
    </location>
    <ligand>
        <name>(2S)-2-hydroxy-3-oxobutyl phosphate</name>
        <dbReference type="ChEBI" id="CHEBI:58830"/>
    </ligand>
</feature>
<feature type="binding site" evidence="1">
    <location>
        <position position="114"/>
    </location>
    <ligand>
        <name>5-amino-6-(D-ribitylamino)uracil</name>
        <dbReference type="ChEBI" id="CHEBI:15934"/>
    </ligand>
</feature>
<feature type="binding site" evidence="1">
    <location>
        <position position="128"/>
    </location>
    <ligand>
        <name>(2S)-2-hydroxy-3-oxobutyl phosphate</name>
        <dbReference type="ChEBI" id="CHEBI:58830"/>
    </ligand>
</feature>